<protein>
    <recommendedName>
        <fullName evidence="9">Developmental regulatory protein wetA</fullName>
    </recommendedName>
</protein>
<accession>Q4WQL4</accession>
<proteinExistence type="evidence at transcript level"/>
<keyword id="KW-0010">Activator</keyword>
<keyword id="KW-0183">Conidiation</keyword>
<keyword id="KW-1185">Reference proteome</keyword>
<keyword id="KW-0749">Sporulation</keyword>
<keyword id="KW-0804">Transcription</keyword>
<keyword id="KW-0805">Transcription regulation</keyword>
<evidence type="ECO:0000250" key="1">
    <source>
        <dbReference type="UniProtKB" id="P22022"/>
    </source>
</evidence>
<evidence type="ECO:0000256" key="2">
    <source>
        <dbReference type="SAM" id="MobiDB-lite"/>
    </source>
</evidence>
<evidence type="ECO:0000269" key="3">
    <source>
    </source>
</evidence>
<evidence type="ECO:0000269" key="4">
    <source>
    </source>
</evidence>
<evidence type="ECO:0000269" key="5">
    <source>
    </source>
</evidence>
<evidence type="ECO:0000269" key="6">
    <source>
    </source>
</evidence>
<evidence type="ECO:0000269" key="7">
    <source>
    </source>
</evidence>
<evidence type="ECO:0000303" key="8">
    <source>
    </source>
</evidence>
<evidence type="ECO:0000305" key="9"/>
<gene>
    <name evidence="8" type="primary">wetA</name>
    <name type="ORF">AFUA_4G13230</name>
</gene>
<reference key="1">
    <citation type="journal article" date="2005" name="Nature">
        <title>Genomic sequence of the pathogenic and allergenic filamentous fungus Aspergillus fumigatus.</title>
        <authorList>
            <person name="Nierman W.C."/>
            <person name="Pain A."/>
            <person name="Anderson M.J."/>
            <person name="Wortman J.R."/>
            <person name="Kim H.S."/>
            <person name="Arroyo J."/>
            <person name="Berriman M."/>
            <person name="Abe K."/>
            <person name="Archer D.B."/>
            <person name="Bermejo C."/>
            <person name="Bennett J.W."/>
            <person name="Bowyer P."/>
            <person name="Chen D."/>
            <person name="Collins M."/>
            <person name="Coulsen R."/>
            <person name="Davies R."/>
            <person name="Dyer P.S."/>
            <person name="Farman M.L."/>
            <person name="Fedorova N."/>
            <person name="Fedorova N.D."/>
            <person name="Feldblyum T.V."/>
            <person name="Fischer R."/>
            <person name="Fosker N."/>
            <person name="Fraser A."/>
            <person name="Garcia J.L."/>
            <person name="Garcia M.J."/>
            <person name="Goble A."/>
            <person name="Goldman G.H."/>
            <person name="Gomi K."/>
            <person name="Griffith-Jones S."/>
            <person name="Gwilliam R."/>
            <person name="Haas B.J."/>
            <person name="Haas H."/>
            <person name="Harris D.E."/>
            <person name="Horiuchi H."/>
            <person name="Huang J."/>
            <person name="Humphray S."/>
            <person name="Jimenez J."/>
            <person name="Keller N."/>
            <person name="Khouri H."/>
            <person name="Kitamoto K."/>
            <person name="Kobayashi T."/>
            <person name="Konzack S."/>
            <person name="Kulkarni R."/>
            <person name="Kumagai T."/>
            <person name="Lafton A."/>
            <person name="Latge J.-P."/>
            <person name="Li W."/>
            <person name="Lord A."/>
            <person name="Lu C."/>
            <person name="Majoros W.H."/>
            <person name="May G.S."/>
            <person name="Miller B.L."/>
            <person name="Mohamoud Y."/>
            <person name="Molina M."/>
            <person name="Monod M."/>
            <person name="Mouyna I."/>
            <person name="Mulligan S."/>
            <person name="Murphy L.D."/>
            <person name="O'Neil S."/>
            <person name="Paulsen I."/>
            <person name="Penalva M.A."/>
            <person name="Pertea M."/>
            <person name="Price C."/>
            <person name="Pritchard B.L."/>
            <person name="Quail M.A."/>
            <person name="Rabbinowitsch E."/>
            <person name="Rawlins N."/>
            <person name="Rajandream M.A."/>
            <person name="Reichard U."/>
            <person name="Renauld H."/>
            <person name="Robson G.D."/>
            <person name="Rodriguez de Cordoba S."/>
            <person name="Rodriguez-Pena J.M."/>
            <person name="Ronning C.M."/>
            <person name="Rutter S."/>
            <person name="Salzberg S.L."/>
            <person name="Sanchez M."/>
            <person name="Sanchez-Ferrero J.C."/>
            <person name="Saunders D."/>
            <person name="Seeger K."/>
            <person name="Squares R."/>
            <person name="Squares S."/>
            <person name="Takeuchi M."/>
            <person name="Tekaia F."/>
            <person name="Turner G."/>
            <person name="Vazquez de Aldana C.R."/>
            <person name="Weidman J."/>
            <person name="White O."/>
            <person name="Woodward J.R."/>
            <person name="Yu J.-H."/>
            <person name="Fraser C.M."/>
            <person name="Galagan J.E."/>
            <person name="Asai K."/>
            <person name="Machida M."/>
            <person name="Hall N."/>
            <person name="Barrell B.G."/>
            <person name="Denning D.W."/>
        </authorList>
    </citation>
    <scope>NUCLEOTIDE SEQUENCE [LARGE SCALE GENOMIC DNA]</scope>
    <source>
        <strain>ATCC MYA-4609 / CBS 101355 / FGSC A1100 / Af293</strain>
    </source>
</reference>
<reference key="2">
    <citation type="journal article" date="2008" name="Mol. Microbiol.">
        <title>Functional characterization of the Aspergillus fumigatus CRZ1 homologue, CrzA.</title>
        <authorList>
            <person name="Soriani F.M."/>
            <person name="Malavazi I."/>
            <person name="da Silva Ferreira M.E."/>
            <person name="Savoldi M."/>
            <person name="Von Zeska Kress M.R."/>
            <person name="de Souza Goldman M.H."/>
            <person name="Loss O."/>
            <person name="Bignell E."/>
            <person name="Goldman G.H."/>
        </authorList>
    </citation>
    <scope>INDUCTION</scope>
</reference>
<reference key="3">
    <citation type="journal article" date="2011" name="Microbiology">
        <title>AbaA and WetA govern distinct stages of Aspergillus fumigatus development.</title>
        <authorList>
            <person name="Tao L."/>
            <person name="Yu J.H."/>
        </authorList>
    </citation>
    <scope>INDUCTION</scope>
    <scope>FUNCTION</scope>
    <scope>DISRUPTION PHENOTYPE</scope>
</reference>
<reference key="4">
    <citation type="journal article" date="2012" name="Eukaryot. Cell">
        <title>Heat shock protein 90 is required for conidiation and cell wall integrity in Aspergillus fumigatus.</title>
        <authorList>
            <person name="Lamoth F."/>
            <person name="Juvvadi P.R."/>
            <person name="Fortwendel J.R."/>
            <person name="Steinbach W.J."/>
        </authorList>
    </citation>
    <scope>INDUCTION</scope>
</reference>
<reference key="5">
    <citation type="journal article" date="2013" name="Eukaryot. Cell">
        <title>Laccases involved in 1,8-dihydroxynaphthalene melanin biosynthesis in Aspergillus fumigatus are regulated by developmental factors and copper homeostasis.</title>
        <authorList>
            <person name="Upadhyay S."/>
            <person name="Torres G."/>
            <person name="Lin X."/>
        </authorList>
    </citation>
    <scope>FUNCTION</scope>
</reference>
<reference key="6">
    <citation type="journal article" date="2015" name="Mycobiology">
        <title>In vitro antifungal activity and mode of action of 2',4'-dihydroxychalcone against Aspergillus fumigatus.</title>
        <authorList>
            <person name="Seo Y.H."/>
            <person name="Kim S.S."/>
            <person name="Shin K.S."/>
        </authorList>
    </citation>
    <scope>INDUCTION</scope>
</reference>
<organism>
    <name type="scientific">Aspergillus fumigatus (strain ATCC MYA-4609 / CBS 101355 / FGSC A1100 / Af293)</name>
    <name type="common">Neosartorya fumigata</name>
    <dbReference type="NCBI Taxonomy" id="330879"/>
    <lineage>
        <taxon>Eukaryota</taxon>
        <taxon>Fungi</taxon>
        <taxon>Dikarya</taxon>
        <taxon>Ascomycota</taxon>
        <taxon>Pezizomycotina</taxon>
        <taxon>Eurotiomycetes</taxon>
        <taxon>Eurotiomycetidae</taxon>
        <taxon>Eurotiales</taxon>
        <taxon>Aspergillaceae</taxon>
        <taxon>Aspergillus</taxon>
        <taxon>Aspergillus subgen. Fumigati</taxon>
    </lineage>
</organism>
<name>WETA_ASPFU</name>
<dbReference type="EMBL" id="AAHF01000005">
    <property type="protein sequence ID" value="EAL89470.1"/>
    <property type="molecule type" value="Genomic_DNA"/>
</dbReference>
<dbReference type="RefSeq" id="XP_751508.1">
    <property type="nucleotide sequence ID" value="XM_746415.1"/>
</dbReference>
<dbReference type="STRING" id="330879.Q4WQL4"/>
<dbReference type="EnsemblFungi" id="EAL89470">
    <property type="protein sequence ID" value="EAL89470"/>
    <property type="gene ID" value="AFUA_4G13230"/>
</dbReference>
<dbReference type="GeneID" id="3509534"/>
<dbReference type="KEGG" id="afm:AFUA_4G13230"/>
<dbReference type="VEuPathDB" id="FungiDB:Afu4g13230"/>
<dbReference type="eggNOG" id="ENOG502S8IT">
    <property type="taxonomic scope" value="Eukaryota"/>
</dbReference>
<dbReference type="HOGENOM" id="CLU_030750_0_0_1"/>
<dbReference type="InParanoid" id="Q4WQL4"/>
<dbReference type="OMA" id="MFAQPFD"/>
<dbReference type="OrthoDB" id="2575228at2759"/>
<dbReference type="Proteomes" id="UP000002530">
    <property type="component" value="Chromosome 4"/>
</dbReference>
<dbReference type="GO" id="GO:0042243">
    <property type="term" value="P:asexual spore wall assembly"/>
    <property type="evidence" value="ECO:0000315"/>
    <property type="project" value="AspGD"/>
</dbReference>
<dbReference type="GO" id="GO:0048315">
    <property type="term" value="P:conidium formation"/>
    <property type="evidence" value="ECO:0000315"/>
    <property type="project" value="CACAO"/>
</dbReference>
<dbReference type="GO" id="GO:0006357">
    <property type="term" value="P:regulation of transcription by RNA polymerase II"/>
    <property type="evidence" value="ECO:0000318"/>
    <property type="project" value="GO_Central"/>
</dbReference>
<dbReference type="GO" id="GO:0005992">
    <property type="term" value="P:trehalose biosynthetic process"/>
    <property type="evidence" value="ECO:0000315"/>
    <property type="project" value="AspGD"/>
</dbReference>
<dbReference type="InterPro" id="IPR040112">
    <property type="entry name" value="WetA"/>
</dbReference>
<dbReference type="PANTHER" id="PTHR22934:SF25">
    <property type="entry name" value="DEVELOPMENTAL REGULATORY PROTEIN WETA"/>
    <property type="match status" value="1"/>
</dbReference>
<dbReference type="PANTHER" id="PTHR22934">
    <property type="entry name" value="PROTEIN ESC1/WETA-RELATED"/>
    <property type="match status" value="1"/>
</dbReference>
<feature type="chain" id="PRO_0000435926" description="Developmental regulatory protein wetA">
    <location>
        <begin position="1"/>
        <end position="566"/>
    </location>
</feature>
<feature type="region of interest" description="Disordered" evidence="2">
    <location>
        <begin position="116"/>
        <end position="174"/>
    </location>
</feature>
<feature type="region of interest" description="Disordered" evidence="2">
    <location>
        <begin position="232"/>
        <end position="316"/>
    </location>
</feature>
<feature type="region of interest" description="Disordered" evidence="2">
    <location>
        <begin position="334"/>
        <end position="364"/>
    </location>
</feature>
<feature type="region of interest" description="Disordered" evidence="2">
    <location>
        <begin position="381"/>
        <end position="400"/>
    </location>
</feature>
<feature type="region of interest" description="Disordered" evidence="2">
    <location>
        <begin position="429"/>
        <end position="542"/>
    </location>
</feature>
<feature type="compositionally biased region" description="Polar residues" evidence="2">
    <location>
        <begin position="165"/>
        <end position="174"/>
    </location>
</feature>
<feature type="compositionally biased region" description="Polar residues" evidence="2">
    <location>
        <begin position="269"/>
        <end position="291"/>
    </location>
</feature>
<feature type="compositionally biased region" description="Low complexity" evidence="2">
    <location>
        <begin position="298"/>
        <end position="316"/>
    </location>
</feature>
<feature type="compositionally biased region" description="Polar residues" evidence="2">
    <location>
        <begin position="347"/>
        <end position="364"/>
    </location>
</feature>
<feature type="compositionally biased region" description="Polar residues" evidence="2">
    <location>
        <begin position="381"/>
        <end position="398"/>
    </location>
</feature>
<feature type="compositionally biased region" description="Low complexity" evidence="2">
    <location>
        <begin position="435"/>
        <end position="448"/>
    </location>
</feature>
<feature type="compositionally biased region" description="Polar residues" evidence="2">
    <location>
        <begin position="449"/>
        <end position="462"/>
    </location>
</feature>
<feature type="compositionally biased region" description="Basic residues" evidence="2">
    <location>
        <begin position="463"/>
        <end position="473"/>
    </location>
</feature>
<feature type="compositionally biased region" description="Low complexity" evidence="2">
    <location>
        <begin position="482"/>
        <end position="500"/>
    </location>
</feature>
<feature type="compositionally biased region" description="Polar residues" evidence="2">
    <location>
        <begin position="501"/>
        <end position="511"/>
    </location>
</feature>
<sequence length="566" mass="61506">MFAQPFDHAFNDLFSQYVDMDSSMVDGNKDVSIPSDFDQIFSLDSLSSDCGDHSPPVPTKPTHQSPQPWATDLWSLPQDAASSASQCSFTFQDTVHPSAVSDLSFHLEAPPTSHPVPAVTCKASSRSPSTPPATPHHKSTKSALVTPKSIRRHRDSHERKLLRKQSFSPSLMRPSQLQAGRMMYPEAWAQRFQNFSLHSSGEHLPLSPPPSDILVQHENTPADNVVTHMNHSTEGLSRNPAEMPSHYETGIFNQSPAISMPSPSAKLLAQQQQHNYLSQSNNSTMATSSPPSGDDIFSSPHSSDPQSLSSWHSDSLGGSALPFTPELQAHDGQAWWPSMPSRVPRQPSYQHVVSSPAPQRSIQSNNQHDLMQGGLMIQFDSSFDGSTSADPSFSSVVTSAPMPQENQNMYSHIPVTPQKYMNLSAYATPPVQHTSRSPSLSPRGRGSPTQGSPLRNEASTKTSPHRRGYHGRKLSSQSMNTPKPVKGPNSSSPGSGSNKSLTVSFVNFTPNDSKKILTGVAPSGSSKTKARREQEARDRRRKLSEAAINAVRKAGGDVEALEAVLC</sequence>
<comment type="function">
    <text evidence="1 4 6">BrlA, abaA and wetA are pivotal regulators of conidiophore development and conidium maturation (By similarity). They act individually and together to regulate their own expression and that of numerous other sporulation-specific genes (By similarity). Plays an essential role in the completion of conidial maturation and is essential for trehalose biogenesis in conidia (PubMed:20966095). Negatively regulates expression of the melanin biosynthetic gene cluster (PubMed:24123270). Also plays an a role in the early phase of fungal growth including proper hyphal branching (PubMed:20966095).</text>
</comment>
<comment type="induction">
    <text evidence="3 4 5 7">Highly expressed during conidiation (PubMed:18298443, PubMed:20966095). Expression is positively regulated by hsp90 (PubMed:22822234). Expression is also controlled by upstream regulators calA and crzA (PubMed:18298443). Expression is decreased by 2',4'-Dihydroxychalcone (2',4'-DHC) (PubMed:26190922).</text>
</comment>
<comment type="disruption phenotype">
    <text evidence="4">Causes the formation of defective spore walls and a lack of trehalose biogenesis, leading to a rapid loss of spore viability and reduced tolerance to various stresses (PubMed:20966095). Also leads to delayed germtube formation and reduced hyphal branching (PubMed:20966095).</text>
</comment>
<comment type="similarity">
    <text evidence="9">Belongs to the wetA family.</text>
</comment>